<feature type="chain" id="PRO_0000394140" description="ATP-dependent DNA helicase 2 subunit KU80">
    <location>
        <begin position="1"/>
        <end position="688"/>
    </location>
</feature>
<feature type="domain" description="Ku">
    <location>
        <begin position="222"/>
        <end position="430"/>
    </location>
</feature>
<dbReference type="EC" id="3.6.4.12"/>
<dbReference type="EMBL" id="AC128647">
    <property type="protein sequence ID" value="AAS01977.1"/>
    <property type="molecule type" value="Genomic_DNA"/>
</dbReference>
<dbReference type="EMBL" id="AC128647">
    <property type="protein sequence ID" value="AAS01978.1"/>
    <property type="status" value="ALT_SEQ"/>
    <property type="molecule type" value="Genomic_DNA"/>
</dbReference>
<dbReference type="EMBL" id="DP000009">
    <property type="protein sequence ID" value="ABF99985.1"/>
    <property type="molecule type" value="Genomic_DNA"/>
</dbReference>
<dbReference type="EMBL" id="AP008209">
    <property type="protein sequence ID" value="BAH92449.1"/>
    <property type="status" value="ALT_SEQ"/>
    <property type="molecule type" value="Genomic_DNA"/>
</dbReference>
<dbReference type="EMBL" id="AP014959">
    <property type="status" value="NOT_ANNOTATED_CDS"/>
    <property type="molecule type" value="Genomic_DNA"/>
</dbReference>
<dbReference type="EMBL" id="CM000140">
    <property type="protein sequence ID" value="EEE60332.1"/>
    <property type="status" value="ALT_SEQ"/>
    <property type="molecule type" value="Genomic_DNA"/>
</dbReference>
<dbReference type="RefSeq" id="XP_015631136.1">
    <property type="nucleotide sequence ID" value="XM_015775650.1"/>
</dbReference>
<dbReference type="SMR" id="Q75IP6"/>
<dbReference type="FunCoup" id="Q75IP6">
    <property type="interactions" value="2505"/>
</dbReference>
<dbReference type="STRING" id="39947.Q75IP6"/>
<dbReference type="iPTMnet" id="Q75IP6"/>
<dbReference type="PaxDb" id="39947-Q75IP6"/>
<dbReference type="KEGG" id="dosa:Os03g0856200"/>
<dbReference type="eggNOG" id="KOG2326">
    <property type="taxonomic scope" value="Eukaryota"/>
</dbReference>
<dbReference type="HOGENOM" id="CLU_010975_2_0_1"/>
<dbReference type="InParanoid" id="Q75IP6"/>
<dbReference type="OrthoDB" id="30826at2759"/>
<dbReference type="Proteomes" id="UP000000763">
    <property type="component" value="Chromosome 3"/>
</dbReference>
<dbReference type="Proteomes" id="UP000007752">
    <property type="component" value="Chromosome 3"/>
</dbReference>
<dbReference type="Proteomes" id="UP000059680">
    <property type="component" value="Chromosome 3"/>
</dbReference>
<dbReference type="GO" id="GO:0043564">
    <property type="term" value="C:Ku70:Ku80 complex"/>
    <property type="evidence" value="ECO:0000318"/>
    <property type="project" value="GO_Central"/>
</dbReference>
<dbReference type="GO" id="GO:0005524">
    <property type="term" value="F:ATP binding"/>
    <property type="evidence" value="ECO:0007669"/>
    <property type="project" value="UniProtKB-KW"/>
</dbReference>
<dbReference type="GO" id="GO:0016887">
    <property type="term" value="F:ATP hydrolysis activity"/>
    <property type="evidence" value="ECO:0007669"/>
    <property type="project" value="RHEA"/>
</dbReference>
<dbReference type="GO" id="GO:0003684">
    <property type="term" value="F:damaged DNA binding"/>
    <property type="evidence" value="ECO:0007669"/>
    <property type="project" value="InterPro"/>
</dbReference>
<dbReference type="GO" id="GO:0003678">
    <property type="term" value="F:DNA helicase activity"/>
    <property type="evidence" value="ECO:0007669"/>
    <property type="project" value="InterPro"/>
</dbReference>
<dbReference type="GO" id="GO:0042162">
    <property type="term" value="F:telomeric DNA binding"/>
    <property type="evidence" value="ECO:0000318"/>
    <property type="project" value="GO_Central"/>
</dbReference>
<dbReference type="GO" id="GO:0006310">
    <property type="term" value="P:DNA recombination"/>
    <property type="evidence" value="ECO:0007669"/>
    <property type="project" value="UniProtKB-KW"/>
</dbReference>
<dbReference type="GO" id="GO:0006303">
    <property type="term" value="P:double-strand break repair via nonhomologous end joining"/>
    <property type="evidence" value="ECO:0000318"/>
    <property type="project" value="GO_Central"/>
</dbReference>
<dbReference type="GO" id="GO:0000723">
    <property type="term" value="P:telomere maintenance"/>
    <property type="evidence" value="ECO:0000318"/>
    <property type="project" value="GO_Central"/>
</dbReference>
<dbReference type="CDD" id="cd00873">
    <property type="entry name" value="KU80"/>
    <property type="match status" value="1"/>
</dbReference>
<dbReference type="FunFam" id="2.40.290.10:FF:000006">
    <property type="entry name" value="ATP-dependent DNA helicase 2 subunit KU80"/>
    <property type="match status" value="1"/>
</dbReference>
<dbReference type="FunFam" id="3.40.50.410:FF:000102">
    <property type="entry name" value="ATP-dependent DNA helicase 2 subunit KU80"/>
    <property type="match status" value="1"/>
</dbReference>
<dbReference type="FunFam" id="1.10.1600.10:FF:000002">
    <property type="entry name" value="X-ray repair cross-complementing protein 5"/>
    <property type="match status" value="1"/>
</dbReference>
<dbReference type="FunFam" id="1.25.40.240:FF:000001">
    <property type="entry name" value="X-ray repair cross-complementing protein 5"/>
    <property type="match status" value="1"/>
</dbReference>
<dbReference type="Gene3D" id="1.10.1600.10">
    <property type="match status" value="1"/>
</dbReference>
<dbReference type="Gene3D" id="2.40.290.10">
    <property type="match status" value="1"/>
</dbReference>
<dbReference type="Gene3D" id="1.25.40.240">
    <property type="entry name" value="Ku, C-terminal domain"/>
    <property type="match status" value="1"/>
</dbReference>
<dbReference type="Gene3D" id="3.40.50.410">
    <property type="entry name" value="von Willebrand factor, type A domain"/>
    <property type="match status" value="1"/>
</dbReference>
<dbReference type="InterPro" id="IPR006164">
    <property type="entry name" value="Ku70/Ku80_beta-barrel_dom"/>
</dbReference>
<dbReference type="InterPro" id="IPR024193">
    <property type="entry name" value="Ku80"/>
</dbReference>
<dbReference type="InterPro" id="IPR005160">
    <property type="entry name" value="Ku_C"/>
</dbReference>
<dbReference type="InterPro" id="IPR036494">
    <property type="entry name" value="Ku_C_sf"/>
</dbReference>
<dbReference type="InterPro" id="IPR005161">
    <property type="entry name" value="Ku_N"/>
</dbReference>
<dbReference type="InterPro" id="IPR014893">
    <property type="entry name" value="Ku_PK_bind"/>
</dbReference>
<dbReference type="InterPro" id="IPR016194">
    <property type="entry name" value="SPOC-like_C_dom_sf"/>
</dbReference>
<dbReference type="InterPro" id="IPR036465">
    <property type="entry name" value="vWFA_dom_sf"/>
</dbReference>
<dbReference type="PANTHER" id="PTHR12604">
    <property type="entry name" value="KU AUTOANTIGEN DNA HELICASE"/>
    <property type="match status" value="1"/>
</dbReference>
<dbReference type="PANTHER" id="PTHR12604:SF4">
    <property type="entry name" value="X-RAY REPAIR CROSS-COMPLEMENTING PROTEIN 5"/>
    <property type="match status" value="1"/>
</dbReference>
<dbReference type="Pfam" id="PF02735">
    <property type="entry name" value="Ku"/>
    <property type="match status" value="1"/>
</dbReference>
<dbReference type="Pfam" id="PF03730">
    <property type="entry name" value="Ku_C"/>
    <property type="match status" value="1"/>
</dbReference>
<dbReference type="Pfam" id="PF03731">
    <property type="entry name" value="Ku_N"/>
    <property type="match status" value="1"/>
</dbReference>
<dbReference type="Pfam" id="PF08785">
    <property type="entry name" value="Ku_PK_bind"/>
    <property type="match status" value="1"/>
</dbReference>
<dbReference type="PIRSF" id="PIRSF016570">
    <property type="entry name" value="Ku80"/>
    <property type="match status" value="1"/>
</dbReference>
<dbReference type="SMART" id="SM00559">
    <property type="entry name" value="Ku78"/>
    <property type="match status" value="1"/>
</dbReference>
<dbReference type="SUPFAM" id="SSF101420">
    <property type="entry name" value="C-terminal domain of Ku80"/>
    <property type="match status" value="1"/>
</dbReference>
<dbReference type="SUPFAM" id="SSF100939">
    <property type="entry name" value="SPOC domain-like"/>
    <property type="match status" value="1"/>
</dbReference>
<dbReference type="SUPFAM" id="SSF53300">
    <property type="entry name" value="vWA-like"/>
    <property type="match status" value="1"/>
</dbReference>
<name>KU80_ORYSJ</name>
<reference key="1">
    <citation type="journal article" date="2005" name="Genome Res.">
        <title>Sequence, annotation, and analysis of synteny between rice chromosome 3 and diverged grass species.</title>
        <authorList>
            <consortium name="The rice chromosome 3 sequencing consortium"/>
            <person name="Buell C.R."/>
            <person name="Yuan Q."/>
            <person name="Ouyang S."/>
            <person name="Liu J."/>
            <person name="Zhu W."/>
            <person name="Wang A."/>
            <person name="Maiti R."/>
            <person name="Haas B."/>
            <person name="Wortman J."/>
            <person name="Pertea M."/>
            <person name="Jones K.M."/>
            <person name="Kim M."/>
            <person name="Overton L."/>
            <person name="Tsitrin T."/>
            <person name="Fadrosh D."/>
            <person name="Bera J."/>
            <person name="Weaver B."/>
            <person name="Jin S."/>
            <person name="Johri S."/>
            <person name="Reardon M."/>
            <person name="Webb K."/>
            <person name="Hill J."/>
            <person name="Moffat K."/>
            <person name="Tallon L."/>
            <person name="Van Aken S."/>
            <person name="Lewis M."/>
            <person name="Utterback T."/>
            <person name="Feldblyum T."/>
            <person name="Zismann V."/>
            <person name="Iobst S."/>
            <person name="Hsiao J."/>
            <person name="de Vazeille A.R."/>
            <person name="Salzberg S.L."/>
            <person name="White O."/>
            <person name="Fraser C.M."/>
            <person name="Yu Y."/>
            <person name="Kim H."/>
            <person name="Rambo T."/>
            <person name="Currie J."/>
            <person name="Collura K."/>
            <person name="Kernodle-Thompson S."/>
            <person name="Wei F."/>
            <person name="Kudrna K."/>
            <person name="Ammiraju J.S.S."/>
            <person name="Luo M."/>
            <person name="Goicoechea J.L."/>
            <person name="Wing R.A."/>
            <person name="Henry D."/>
            <person name="Oates R."/>
            <person name="Palmer M."/>
            <person name="Pries G."/>
            <person name="Saski C."/>
            <person name="Simmons J."/>
            <person name="Soderlund C."/>
            <person name="Nelson W."/>
            <person name="de la Bastide M."/>
            <person name="Spiegel L."/>
            <person name="Nascimento L."/>
            <person name="Huang E."/>
            <person name="Preston R."/>
            <person name="Zutavern T."/>
            <person name="Palmer L."/>
            <person name="O'Shaughnessy A."/>
            <person name="Dike S."/>
            <person name="McCombie W.R."/>
            <person name="Minx P."/>
            <person name="Cordum H."/>
            <person name="Wilson R."/>
            <person name="Jin W."/>
            <person name="Lee H.R."/>
            <person name="Jiang J."/>
            <person name="Jackson S."/>
        </authorList>
    </citation>
    <scope>NUCLEOTIDE SEQUENCE [LARGE SCALE GENOMIC DNA]</scope>
    <source>
        <strain>cv. Nipponbare</strain>
    </source>
</reference>
<reference key="2">
    <citation type="journal article" date="2005" name="Nature">
        <title>The map-based sequence of the rice genome.</title>
        <authorList>
            <consortium name="International rice genome sequencing project (IRGSP)"/>
        </authorList>
    </citation>
    <scope>NUCLEOTIDE SEQUENCE [LARGE SCALE GENOMIC DNA]</scope>
    <source>
        <strain>cv. Nipponbare</strain>
    </source>
</reference>
<reference key="3">
    <citation type="journal article" date="2008" name="Nucleic Acids Res.">
        <title>The rice annotation project database (RAP-DB): 2008 update.</title>
        <authorList>
            <consortium name="The rice annotation project (RAP)"/>
        </authorList>
    </citation>
    <scope>GENOME REANNOTATION</scope>
    <source>
        <strain>cv. Nipponbare</strain>
    </source>
</reference>
<reference key="4">
    <citation type="journal article" date="2013" name="Rice">
        <title>Improvement of the Oryza sativa Nipponbare reference genome using next generation sequence and optical map data.</title>
        <authorList>
            <person name="Kawahara Y."/>
            <person name="de la Bastide M."/>
            <person name="Hamilton J.P."/>
            <person name="Kanamori H."/>
            <person name="McCombie W.R."/>
            <person name="Ouyang S."/>
            <person name="Schwartz D.C."/>
            <person name="Tanaka T."/>
            <person name="Wu J."/>
            <person name="Zhou S."/>
            <person name="Childs K.L."/>
            <person name="Davidson R.M."/>
            <person name="Lin H."/>
            <person name="Quesada-Ocampo L."/>
            <person name="Vaillancourt B."/>
            <person name="Sakai H."/>
            <person name="Lee S.S."/>
            <person name="Kim J."/>
            <person name="Numa H."/>
            <person name="Itoh T."/>
            <person name="Buell C.R."/>
            <person name="Matsumoto T."/>
        </authorList>
    </citation>
    <scope>GENOME REANNOTATION</scope>
    <source>
        <strain>cv. Nipponbare</strain>
    </source>
</reference>
<reference key="5">
    <citation type="journal article" date="2005" name="PLoS Biol.">
        <title>The genomes of Oryza sativa: a history of duplications.</title>
        <authorList>
            <person name="Yu J."/>
            <person name="Wang J."/>
            <person name="Lin W."/>
            <person name="Li S."/>
            <person name="Li H."/>
            <person name="Zhou J."/>
            <person name="Ni P."/>
            <person name="Dong W."/>
            <person name="Hu S."/>
            <person name="Zeng C."/>
            <person name="Zhang J."/>
            <person name="Zhang Y."/>
            <person name="Li R."/>
            <person name="Xu Z."/>
            <person name="Li S."/>
            <person name="Li X."/>
            <person name="Zheng H."/>
            <person name="Cong L."/>
            <person name="Lin L."/>
            <person name="Yin J."/>
            <person name="Geng J."/>
            <person name="Li G."/>
            <person name="Shi J."/>
            <person name="Liu J."/>
            <person name="Lv H."/>
            <person name="Li J."/>
            <person name="Wang J."/>
            <person name="Deng Y."/>
            <person name="Ran L."/>
            <person name="Shi X."/>
            <person name="Wang X."/>
            <person name="Wu Q."/>
            <person name="Li C."/>
            <person name="Ren X."/>
            <person name="Wang J."/>
            <person name="Wang X."/>
            <person name="Li D."/>
            <person name="Liu D."/>
            <person name="Zhang X."/>
            <person name="Ji Z."/>
            <person name="Zhao W."/>
            <person name="Sun Y."/>
            <person name="Zhang Z."/>
            <person name="Bao J."/>
            <person name="Han Y."/>
            <person name="Dong L."/>
            <person name="Ji J."/>
            <person name="Chen P."/>
            <person name="Wu S."/>
            <person name="Liu J."/>
            <person name="Xiao Y."/>
            <person name="Bu D."/>
            <person name="Tan J."/>
            <person name="Yang L."/>
            <person name="Ye C."/>
            <person name="Zhang J."/>
            <person name="Xu J."/>
            <person name="Zhou Y."/>
            <person name="Yu Y."/>
            <person name="Zhang B."/>
            <person name="Zhuang S."/>
            <person name="Wei H."/>
            <person name="Liu B."/>
            <person name="Lei M."/>
            <person name="Yu H."/>
            <person name="Li Y."/>
            <person name="Xu H."/>
            <person name="Wei S."/>
            <person name="He X."/>
            <person name="Fang L."/>
            <person name="Zhang Z."/>
            <person name="Zhang Y."/>
            <person name="Huang X."/>
            <person name="Su Z."/>
            <person name="Tong W."/>
            <person name="Li J."/>
            <person name="Tong Z."/>
            <person name="Li S."/>
            <person name="Ye J."/>
            <person name="Wang L."/>
            <person name="Fang L."/>
            <person name="Lei T."/>
            <person name="Chen C.-S."/>
            <person name="Chen H.-C."/>
            <person name="Xu Z."/>
            <person name="Li H."/>
            <person name="Huang H."/>
            <person name="Zhang F."/>
            <person name="Xu H."/>
            <person name="Li N."/>
            <person name="Zhao C."/>
            <person name="Li S."/>
            <person name="Dong L."/>
            <person name="Huang Y."/>
            <person name="Li L."/>
            <person name="Xi Y."/>
            <person name="Qi Q."/>
            <person name="Li W."/>
            <person name="Zhang B."/>
            <person name="Hu W."/>
            <person name="Zhang Y."/>
            <person name="Tian X."/>
            <person name="Jiao Y."/>
            <person name="Liang X."/>
            <person name="Jin J."/>
            <person name="Gao L."/>
            <person name="Zheng W."/>
            <person name="Hao B."/>
            <person name="Liu S.-M."/>
            <person name="Wang W."/>
            <person name="Yuan L."/>
            <person name="Cao M."/>
            <person name="McDermott J."/>
            <person name="Samudrala R."/>
            <person name="Wang J."/>
            <person name="Wong G.K.-S."/>
            <person name="Yang H."/>
        </authorList>
    </citation>
    <scope>NUCLEOTIDE SEQUENCE [LARGE SCALE GENOMIC DNA]</scope>
    <source>
        <strain>cv. Nipponbare</strain>
    </source>
</reference>
<reference key="6">
    <citation type="journal article" date="2010" name="Plant Physiol.">
        <title>OsKu70 is associated with developmental growth and genome stability in rice.</title>
        <authorList>
            <person name="Hong J.P."/>
            <person name="Byun M.Y."/>
            <person name="An K."/>
            <person name="Yang S.J."/>
            <person name="An G."/>
            <person name="Kim W.T."/>
        </authorList>
    </citation>
    <scope>INTERACTION WITH KU70</scope>
</reference>
<comment type="function">
    <text evidence="1">Single-stranded DNA-dependent ATP-dependent helicase. Involved in DNA non-homologous end joining (NHEJ) required for double-strand break repair. When associated with KU70, binds to double-stranded telomeric and non-telomeric DNA sequences, but not to single-stranded DNA. Plays a role in maintaining telomere length. Acts as a negative regulator of telomerase (By similarity).</text>
</comment>
<comment type="catalytic activity">
    <reaction>
        <text>ATP + H2O = ADP + phosphate + H(+)</text>
        <dbReference type="Rhea" id="RHEA:13065"/>
        <dbReference type="ChEBI" id="CHEBI:15377"/>
        <dbReference type="ChEBI" id="CHEBI:15378"/>
        <dbReference type="ChEBI" id="CHEBI:30616"/>
        <dbReference type="ChEBI" id="CHEBI:43474"/>
        <dbReference type="ChEBI" id="CHEBI:456216"/>
        <dbReference type="EC" id="3.6.4.12"/>
    </reaction>
</comment>
<comment type="subunit">
    <text evidence="2">Interacts with KU70.</text>
</comment>
<comment type="subcellular location">
    <subcellularLocation>
        <location evidence="1">Nucleus</location>
    </subcellularLocation>
</comment>
<comment type="similarity">
    <text evidence="3">Belongs to the ku80 family.</text>
</comment>
<comment type="sequence caution" evidence="3">
    <conflict type="erroneous gene model prediction">
        <sequence resource="EMBL-CDS" id="AAS01978"/>
    </conflict>
</comment>
<comment type="sequence caution" evidence="3">
    <conflict type="erroneous gene model prediction">
        <sequence resource="EMBL-CDS" id="BAH92449"/>
    </conflict>
</comment>
<comment type="sequence caution" evidence="3">
    <conflict type="erroneous gene model prediction">
        <sequence resource="EMBL-CDS" id="EEE60332"/>
    </conflict>
</comment>
<evidence type="ECO:0000250" key="1"/>
<evidence type="ECO:0000269" key="2">
    <source>
    </source>
</evidence>
<evidence type="ECO:0000305" key="3"/>
<protein>
    <recommendedName>
        <fullName>ATP-dependent DNA helicase 2 subunit KU80</fullName>
        <ecNumber>3.6.4.12</ecNumber>
    </recommendedName>
    <alternativeName>
        <fullName>ATP-dependent DNA helicase 2 subunit 2</fullName>
    </alternativeName>
    <alternativeName>
        <fullName>ATP-dependent DNA helicase II 80 kDa subunit</fullName>
    </alternativeName>
</protein>
<proteinExistence type="evidence at protein level"/>
<organism>
    <name type="scientific">Oryza sativa subsp. japonica</name>
    <name type="common">Rice</name>
    <dbReference type="NCBI Taxonomy" id="39947"/>
    <lineage>
        <taxon>Eukaryota</taxon>
        <taxon>Viridiplantae</taxon>
        <taxon>Streptophyta</taxon>
        <taxon>Embryophyta</taxon>
        <taxon>Tracheophyta</taxon>
        <taxon>Spermatophyta</taxon>
        <taxon>Magnoliopsida</taxon>
        <taxon>Liliopsida</taxon>
        <taxon>Poales</taxon>
        <taxon>Poaceae</taxon>
        <taxon>BOP clade</taxon>
        <taxon>Oryzoideae</taxon>
        <taxon>Oryzeae</taxon>
        <taxon>Oryzinae</taxon>
        <taxon>Oryza</taxon>
        <taxon>Oryza sativa</taxon>
    </lineage>
</organism>
<gene>
    <name type="primary">KU80</name>
    <name type="ordered locus">Os03g0856200</name>
    <name type="ordered locus">LOC_Os03g63920</name>
    <name type="ORF">OsJ_13430</name>
</gene>
<keyword id="KW-0067">ATP-binding</keyword>
<keyword id="KW-0227">DNA damage</keyword>
<keyword id="KW-0233">DNA recombination</keyword>
<keyword id="KW-0234">DNA repair</keyword>
<keyword id="KW-0238">DNA-binding</keyword>
<keyword id="KW-0347">Helicase</keyword>
<keyword id="KW-0378">Hydrolase</keyword>
<keyword id="KW-0547">Nucleotide-binding</keyword>
<keyword id="KW-0539">Nucleus</keyword>
<keyword id="KW-1185">Reference proteome</keyword>
<sequence>MARNKEALVLLLDVGPSMHGVLQEVENICSTLVHKKLVYNRSDEIGVVLFGTKETSNELAKELGGYKHVVVARDIKVVDEETTNALQNLPRGTSPGDFLDAIVVGLDMLIRKFGNIKGKQRMCLVTDAQHPLRDPPQGTKKDQVDTIADQMKRHEIKMDCIIFRESGVRHNAVMDENDQLLYHFRERSVTKVVHVDSPTSLLGALRTRNVLPVTVFRGDLEVSSSFKIKVWVYKKTSEEKFPTLKKYSDKAPASDKFASHEVKVDYEYKSVLEPDTVVPPDQRIKGYLYGPQVVPISSAEWEAVKFKPEKGVKLLGFTDRSSISRHYFMKDVFSFVPEPGNTKAVAAVSALARAMSEMNKVAILRCVWRQGQGNVALGVLTPNISSAKNVLDSFYFNILPFAEDIREFQFRSFSSLPSSSQPTKEQQEAADNLVKMLDLAPPGREEILKPDFTPNPMLERFYRYLDLKSKQPDANVPPLDKCLKKITEPDPDVIDYQAPLIKKLGNVFELKENPKKKKARTQDRLTYTGADDQAKLLEEPSAEKVGVSEALYPPKKKAGEIGDHNPVQDFEAMLTQRSSSTWVQTAIEEMQKYITALIQDSCDRDNHQKALECLVALRKACIIEQEPNEYNGFVTKLCQKFRPAGDKIFLQLLSSKKASLISKEEAPDSDVTEEMARNFCLKPEPSSQ</sequence>
<accession>Q75IP6</accession>
<accession>B9F7Z5</accession>
<accession>C7J053</accession>
<accession>Q75IP5</accession>